<evidence type="ECO:0000255" key="1">
    <source>
        <dbReference type="HAMAP-Rule" id="MF_01342"/>
    </source>
</evidence>
<evidence type="ECO:0000305" key="2"/>
<gene>
    <name evidence="1" type="primary">rplP</name>
    <name type="ordered locus">Tola_0106</name>
</gene>
<proteinExistence type="inferred from homology"/>
<keyword id="KW-1185">Reference proteome</keyword>
<keyword id="KW-0687">Ribonucleoprotein</keyword>
<keyword id="KW-0689">Ribosomal protein</keyword>
<keyword id="KW-0694">RNA-binding</keyword>
<keyword id="KW-0699">rRNA-binding</keyword>
<keyword id="KW-0820">tRNA-binding</keyword>
<protein>
    <recommendedName>
        <fullName evidence="1">Large ribosomal subunit protein uL16</fullName>
    </recommendedName>
    <alternativeName>
        <fullName evidence="2">50S ribosomal protein L16</fullName>
    </alternativeName>
</protein>
<dbReference type="EMBL" id="CP001616">
    <property type="protein sequence ID" value="ACQ91736.1"/>
    <property type="molecule type" value="Genomic_DNA"/>
</dbReference>
<dbReference type="RefSeq" id="WP_012728335.1">
    <property type="nucleotide sequence ID" value="NC_012691.1"/>
</dbReference>
<dbReference type="SMR" id="C4L7T7"/>
<dbReference type="STRING" id="595494.Tola_0106"/>
<dbReference type="KEGG" id="tau:Tola_0106"/>
<dbReference type="eggNOG" id="COG0197">
    <property type="taxonomic scope" value="Bacteria"/>
</dbReference>
<dbReference type="HOGENOM" id="CLU_078858_2_1_6"/>
<dbReference type="OrthoDB" id="9802589at2"/>
<dbReference type="Proteomes" id="UP000009073">
    <property type="component" value="Chromosome"/>
</dbReference>
<dbReference type="GO" id="GO:0022625">
    <property type="term" value="C:cytosolic large ribosomal subunit"/>
    <property type="evidence" value="ECO:0007669"/>
    <property type="project" value="TreeGrafter"/>
</dbReference>
<dbReference type="GO" id="GO:0019843">
    <property type="term" value="F:rRNA binding"/>
    <property type="evidence" value="ECO:0007669"/>
    <property type="project" value="UniProtKB-UniRule"/>
</dbReference>
<dbReference type="GO" id="GO:0003735">
    <property type="term" value="F:structural constituent of ribosome"/>
    <property type="evidence" value="ECO:0007669"/>
    <property type="project" value="InterPro"/>
</dbReference>
<dbReference type="GO" id="GO:0000049">
    <property type="term" value="F:tRNA binding"/>
    <property type="evidence" value="ECO:0007669"/>
    <property type="project" value="UniProtKB-KW"/>
</dbReference>
<dbReference type="GO" id="GO:0006412">
    <property type="term" value="P:translation"/>
    <property type="evidence" value="ECO:0007669"/>
    <property type="project" value="UniProtKB-UniRule"/>
</dbReference>
<dbReference type="CDD" id="cd01433">
    <property type="entry name" value="Ribosomal_L16_L10e"/>
    <property type="match status" value="1"/>
</dbReference>
<dbReference type="FunFam" id="3.90.1170.10:FF:000001">
    <property type="entry name" value="50S ribosomal protein L16"/>
    <property type="match status" value="1"/>
</dbReference>
<dbReference type="Gene3D" id="3.90.1170.10">
    <property type="entry name" value="Ribosomal protein L10e/L16"/>
    <property type="match status" value="1"/>
</dbReference>
<dbReference type="HAMAP" id="MF_01342">
    <property type="entry name" value="Ribosomal_uL16"/>
    <property type="match status" value="1"/>
</dbReference>
<dbReference type="InterPro" id="IPR047873">
    <property type="entry name" value="Ribosomal_uL16"/>
</dbReference>
<dbReference type="InterPro" id="IPR000114">
    <property type="entry name" value="Ribosomal_uL16_bact-type"/>
</dbReference>
<dbReference type="InterPro" id="IPR020798">
    <property type="entry name" value="Ribosomal_uL16_CS"/>
</dbReference>
<dbReference type="InterPro" id="IPR016180">
    <property type="entry name" value="Ribosomal_uL16_dom"/>
</dbReference>
<dbReference type="InterPro" id="IPR036920">
    <property type="entry name" value="Ribosomal_uL16_sf"/>
</dbReference>
<dbReference type="NCBIfam" id="TIGR01164">
    <property type="entry name" value="rplP_bact"/>
    <property type="match status" value="1"/>
</dbReference>
<dbReference type="PANTHER" id="PTHR12220">
    <property type="entry name" value="50S/60S RIBOSOMAL PROTEIN L16"/>
    <property type="match status" value="1"/>
</dbReference>
<dbReference type="PANTHER" id="PTHR12220:SF13">
    <property type="entry name" value="LARGE RIBOSOMAL SUBUNIT PROTEIN UL16M"/>
    <property type="match status" value="1"/>
</dbReference>
<dbReference type="Pfam" id="PF00252">
    <property type="entry name" value="Ribosomal_L16"/>
    <property type="match status" value="1"/>
</dbReference>
<dbReference type="PRINTS" id="PR00060">
    <property type="entry name" value="RIBOSOMALL16"/>
</dbReference>
<dbReference type="SUPFAM" id="SSF54686">
    <property type="entry name" value="Ribosomal protein L16p/L10e"/>
    <property type="match status" value="1"/>
</dbReference>
<dbReference type="PROSITE" id="PS00586">
    <property type="entry name" value="RIBOSOMAL_L16_1"/>
    <property type="match status" value="1"/>
</dbReference>
<dbReference type="PROSITE" id="PS00701">
    <property type="entry name" value="RIBOSOMAL_L16_2"/>
    <property type="match status" value="1"/>
</dbReference>
<sequence>MLQPKRTKFRKVHKGRNRGLANAGSDVSFGTYGLKAVTRGQLTARQIEAARRAMTRAVKRQGKIWIRVFPDKPITEKPLEVRMGKGKGNVEYWVALIQPGKVLYEMDGVPEETAREAFALAAAKLSVKTTFVIRTAM</sequence>
<feature type="chain" id="PRO_1000214747" description="Large ribosomal subunit protein uL16">
    <location>
        <begin position="1"/>
        <end position="137"/>
    </location>
</feature>
<organism>
    <name type="scientific">Tolumonas auensis (strain DSM 9187 / NBRC 110442 / TA 4)</name>
    <dbReference type="NCBI Taxonomy" id="595494"/>
    <lineage>
        <taxon>Bacteria</taxon>
        <taxon>Pseudomonadati</taxon>
        <taxon>Pseudomonadota</taxon>
        <taxon>Gammaproteobacteria</taxon>
        <taxon>Aeromonadales</taxon>
        <taxon>Aeromonadaceae</taxon>
        <taxon>Tolumonas</taxon>
    </lineage>
</organism>
<name>RL16_TOLAT</name>
<accession>C4L7T7</accession>
<reference key="1">
    <citation type="submission" date="2009-05" db="EMBL/GenBank/DDBJ databases">
        <title>Complete sequence of Tolumonas auensis DSM 9187.</title>
        <authorList>
            <consortium name="US DOE Joint Genome Institute"/>
            <person name="Lucas S."/>
            <person name="Copeland A."/>
            <person name="Lapidus A."/>
            <person name="Glavina del Rio T."/>
            <person name="Tice H."/>
            <person name="Bruce D."/>
            <person name="Goodwin L."/>
            <person name="Pitluck S."/>
            <person name="Chertkov O."/>
            <person name="Brettin T."/>
            <person name="Detter J.C."/>
            <person name="Han C."/>
            <person name="Larimer F."/>
            <person name="Land M."/>
            <person name="Hauser L."/>
            <person name="Kyrpides N."/>
            <person name="Mikhailova N."/>
            <person name="Spring S."/>
            <person name="Beller H."/>
        </authorList>
    </citation>
    <scope>NUCLEOTIDE SEQUENCE [LARGE SCALE GENOMIC DNA]</scope>
    <source>
        <strain>DSM 9187 / NBRC 110442 / TA 4</strain>
    </source>
</reference>
<comment type="function">
    <text evidence="1">Binds 23S rRNA and is also seen to make contacts with the A and possibly P site tRNAs.</text>
</comment>
<comment type="subunit">
    <text evidence="1">Part of the 50S ribosomal subunit.</text>
</comment>
<comment type="similarity">
    <text evidence="1">Belongs to the universal ribosomal protein uL16 family.</text>
</comment>